<organism>
    <name type="scientific">Paracoccus denitrificans (strain Pd 1222)</name>
    <dbReference type="NCBI Taxonomy" id="318586"/>
    <lineage>
        <taxon>Bacteria</taxon>
        <taxon>Pseudomonadati</taxon>
        <taxon>Pseudomonadota</taxon>
        <taxon>Alphaproteobacteria</taxon>
        <taxon>Rhodobacterales</taxon>
        <taxon>Paracoccaceae</taxon>
        <taxon>Paracoccus</taxon>
    </lineage>
</organism>
<comment type="function">
    <text evidence="1">Responsible for the transport of dicarboxylates such as succinate, fumarate, and malate from the periplasm across the membrane.</text>
</comment>
<comment type="subcellular location">
    <subcellularLocation>
        <location evidence="1">Cell inner membrane</location>
        <topology evidence="1">Multi-pass membrane protein</topology>
    </subcellularLocation>
</comment>
<comment type="similarity">
    <text evidence="1">Belongs to the dicarboxylate/amino acid:cation symporter (DAACS) (TC 2.A.23) family.</text>
</comment>
<reference key="1">
    <citation type="submission" date="2006-12" db="EMBL/GenBank/DDBJ databases">
        <title>Complete sequence of plasmid 1 of Paracoccus denitrificans PD1222.</title>
        <authorList>
            <person name="Copeland A."/>
            <person name="Lucas S."/>
            <person name="Lapidus A."/>
            <person name="Barry K."/>
            <person name="Detter J.C."/>
            <person name="Glavina del Rio T."/>
            <person name="Hammon N."/>
            <person name="Israni S."/>
            <person name="Dalin E."/>
            <person name="Tice H."/>
            <person name="Pitluck S."/>
            <person name="Munk A.C."/>
            <person name="Brettin T."/>
            <person name="Bruce D."/>
            <person name="Han C."/>
            <person name="Tapia R."/>
            <person name="Gilna P."/>
            <person name="Schmutz J."/>
            <person name="Larimer F."/>
            <person name="Land M."/>
            <person name="Hauser L."/>
            <person name="Kyrpides N."/>
            <person name="Lykidis A."/>
            <person name="Spiro S."/>
            <person name="Richardson D.J."/>
            <person name="Moir J.W.B."/>
            <person name="Ferguson S.J."/>
            <person name="van Spanning R.J.M."/>
            <person name="Richardson P."/>
        </authorList>
    </citation>
    <scope>NUCLEOTIDE SEQUENCE [LARGE SCALE GENOMIC DNA]</scope>
    <source>
        <strain>Pd 1222</strain>
    </source>
</reference>
<geneLocation type="plasmid">
    <name>pPD1222</name>
</geneLocation>
<accession>A1BBD2</accession>
<feature type="chain" id="PRO_0000321987" description="C4-dicarboxylate transport protein">
    <location>
        <begin position="1"/>
        <end position="455"/>
    </location>
</feature>
<feature type="transmembrane region" description="Helical" evidence="1">
    <location>
        <begin position="20"/>
        <end position="40"/>
    </location>
</feature>
<feature type="transmembrane region" description="Helical" evidence="1">
    <location>
        <begin position="59"/>
        <end position="79"/>
    </location>
</feature>
<feature type="transmembrane region" description="Helical" evidence="1">
    <location>
        <begin position="91"/>
        <end position="111"/>
    </location>
</feature>
<feature type="transmembrane region" description="Helical" evidence="1">
    <location>
        <begin position="160"/>
        <end position="180"/>
    </location>
</feature>
<feature type="transmembrane region" description="Helical" evidence="1">
    <location>
        <begin position="209"/>
        <end position="229"/>
    </location>
</feature>
<feature type="transmembrane region" description="Helical" evidence="1">
    <location>
        <begin position="231"/>
        <end position="251"/>
    </location>
</feature>
<feature type="transmembrane region" description="Helical" evidence="1">
    <location>
        <begin position="344"/>
        <end position="364"/>
    </location>
</feature>
<feature type="transmembrane region" description="Helical" evidence="1">
    <location>
        <begin position="367"/>
        <end position="387"/>
    </location>
</feature>
<sequence length="455" mass="47538">MHIDTTAAPVAHAPRPFYRHLYFQVLCAIVAGALIGHFYPETGEALKPLGDAFIKLVKMIIAPVIFLTIVTGLAGMGTLKGVGSVVGKAFGYFLTFSTLALVVGLITANVIRPGAGMNIDPASLDASKVADYASKAHESSLTGFVMDIIPSTITSAFVDGNILQVLFVAILFGIGLILIGDKGKPVVALFEAISHAVFRMVDILMKAAPIGAFGAFAFTIGKYGIASVVNLATLVGTFYLTSALFVIVVLGTVCMLNGFSIFRLISYLKAEILLVLGTSSSESALPSLMEKMEKAGCKRSVVGLVVPTGYSFNLDGTNIYMTLAALFIAQATNTDLTLQQQILLLLVAMLSSKGAAGVTGAGFITLAATLSVVPTVPVAGMALILGVDRFMSECRSITNFIGNAVATVVVSRWEGALDREQFDRVLGGEAGGEVAPIHDLHGAPAGLRLNEASAD</sequence>
<keyword id="KW-0997">Cell inner membrane</keyword>
<keyword id="KW-1003">Cell membrane</keyword>
<keyword id="KW-0472">Membrane</keyword>
<keyword id="KW-0614">Plasmid</keyword>
<keyword id="KW-1185">Reference proteome</keyword>
<keyword id="KW-0769">Symport</keyword>
<keyword id="KW-0812">Transmembrane</keyword>
<keyword id="KW-1133">Transmembrane helix</keyword>
<keyword id="KW-0813">Transport</keyword>
<name>DCTA_PARDP</name>
<proteinExistence type="inferred from homology"/>
<evidence type="ECO:0000255" key="1">
    <source>
        <dbReference type="HAMAP-Rule" id="MF_01300"/>
    </source>
</evidence>
<dbReference type="EMBL" id="CP000491">
    <property type="protein sequence ID" value="ABL72826.1"/>
    <property type="molecule type" value="Genomic_DNA"/>
</dbReference>
<dbReference type="RefSeq" id="WP_011750985.1">
    <property type="nucleotide sequence ID" value="NC_008688.1"/>
</dbReference>
<dbReference type="SMR" id="A1BBD2"/>
<dbReference type="EnsemblBacteria" id="ABL72826">
    <property type="protein sequence ID" value="ABL72826"/>
    <property type="gene ID" value="Pden_4765"/>
</dbReference>
<dbReference type="GeneID" id="93454192"/>
<dbReference type="KEGG" id="pde:Pden_4765"/>
<dbReference type="eggNOG" id="COG1301">
    <property type="taxonomic scope" value="Bacteria"/>
</dbReference>
<dbReference type="HOGENOM" id="CLU_019375_7_0_5"/>
<dbReference type="OrthoDB" id="9766690at2"/>
<dbReference type="Proteomes" id="UP000000361">
    <property type="component" value="Plasmid pPD1222"/>
</dbReference>
<dbReference type="GO" id="GO:0005886">
    <property type="term" value="C:plasma membrane"/>
    <property type="evidence" value="ECO:0007669"/>
    <property type="project" value="UniProtKB-SubCell"/>
</dbReference>
<dbReference type="GO" id="GO:0015138">
    <property type="term" value="F:fumarate transmembrane transporter activity"/>
    <property type="evidence" value="ECO:0007669"/>
    <property type="project" value="TreeGrafter"/>
</dbReference>
<dbReference type="GO" id="GO:0015366">
    <property type="term" value="F:malate:proton symporter activity"/>
    <property type="evidence" value="ECO:0007669"/>
    <property type="project" value="TreeGrafter"/>
</dbReference>
<dbReference type="GO" id="GO:0015141">
    <property type="term" value="F:succinate transmembrane transporter activity"/>
    <property type="evidence" value="ECO:0007669"/>
    <property type="project" value="TreeGrafter"/>
</dbReference>
<dbReference type="GO" id="GO:0070778">
    <property type="term" value="P:L-aspartate transmembrane transport"/>
    <property type="evidence" value="ECO:0007669"/>
    <property type="project" value="TreeGrafter"/>
</dbReference>
<dbReference type="FunFam" id="1.10.3860.10:FF:000001">
    <property type="entry name" value="C4-dicarboxylate transport protein"/>
    <property type="match status" value="1"/>
</dbReference>
<dbReference type="Gene3D" id="1.10.3860.10">
    <property type="entry name" value="Sodium:dicarboxylate symporter"/>
    <property type="match status" value="1"/>
</dbReference>
<dbReference type="HAMAP" id="MF_01300">
    <property type="entry name" value="C4_dicarb_transport"/>
    <property type="match status" value="1"/>
</dbReference>
<dbReference type="InterPro" id="IPR023954">
    <property type="entry name" value="C4_dicarb_transport"/>
</dbReference>
<dbReference type="InterPro" id="IPR001991">
    <property type="entry name" value="Na-dicarboxylate_symporter"/>
</dbReference>
<dbReference type="InterPro" id="IPR018107">
    <property type="entry name" value="Na-dicarboxylate_symporter_CS"/>
</dbReference>
<dbReference type="InterPro" id="IPR036458">
    <property type="entry name" value="Na:dicarbo_symporter_sf"/>
</dbReference>
<dbReference type="NCBIfam" id="NF002461">
    <property type="entry name" value="PRK01663.1"/>
    <property type="match status" value="1"/>
</dbReference>
<dbReference type="NCBIfam" id="NF009587">
    <property type="entry name" value="PRK13027.1"/>
    <property type="match status" value="1"/>
</dbReference>
<dbReference type="PANTHER" id="PTHR42865:SF1">
    <property type="entry name" value="AEROBIC C4-DICARBOXYLATE TRANSPORT PROTEIN"/>
    <property type="match status" value="1"/>
</dbReference>
<dbReference type="PANTHER" id="PTHR42865">
    <property type="entry name" value="PROTON/GLUTAMATE-ASPARTATE SYMPORTER"/>
    <property type="match status" value="1"/>
</dbReference>
<dbReference type="Pfam" id="PF00375">
    <property type="entry name" value="SDF"/>
    <property type="match status" value="1"/>
</dbReference>
<dbReference type="PRINTS" id="PR00173">
    <property type="entry name" value="EDTRNSPORT"/>
</dbReference>
<dbReference type="SUPFAM" id="SSF118215">
    <property type="entry name" value="Proton glutamate symport protein"/>
    <property type="match status" value="1"/>
</dbReference>
<dbReference type="PROSITE" id="PS00713">
    <property type="entry name" value="NA_DICARBOXYL_SYMP_1"/>
    <property type="match status" value="1"/>
</dbReference>
<dbReference type="PROSITE" id="PS00714">
    <property type="entry name" value="NA_DICARBOXYL_SYMP_2"/>
    <property type="match status" value="1"/>
</dbReference>
<protein>
    <recommendedName>
        <fullName evidence="1">C4-dicarboxylate transport protein</fullName>
    </recommendedName>
</protein>
<gene>
    <name evidence="1" type="primary">dctA</name>
    <name type="ordered locus">Pden_4765</name>
</gene>